<proteinExistence type="inferred from homology"/>
<comment type="function">
    <text evidence="1">Required for accurate and efficient protein synthesis under certain stress conditions. May act as a fidelity factor of the translation reaction, by catalyzing a one-codon backward translocation of tRNAs on improperly translocated ribosomes. Back-translocation proceeds from a post-translocation (POST) complex to a pre-translocation (PRE) complex, thus giving elongation factor G a second chance to translocate the tRNAs correctly. Binds to ribosomes in a GTP-dependent manner.</text>
</comment>
<comment type="catalytic activity">
    <reaction evidence="1">
        <text>GTP + H2O = GDP + phosphate + H(+)</text>
        <dbReference type="Rhea" id="RHEA:19669"/>
        <dbReference type="ChEBI" id="CHEBI:15377"/>
        <dbReference type="ChEBI" id="CHEBI:15378"/>
        <dbReference type="ChEBI" id="CHEBI:37565"/>
        <dbReference type="ChEBI" id="CHEBI:43474"/>
        <dbReference type="ChEBI" id="CHEBI:58189"/>
        <dbReference type="EC" id="3.6.5.n1"/>
    </reaction>
</comment>
<comment type="subcellular location">
    <subcellularLocation>
        <location evidence="1">Cell inner membrane</location>
        <topology evidence="1">Peripheral membrane protein</topology>
        <orientation evidence="1">Cytoplasmic side</orientation>
    </subcellularLocation>
</comment>
<comment type="similarity">
    <text evidence="1">Belongs to the TRAFAC class translation factor GTPase superfamily. Classic translation factor GTPase family. LepA subfamily.</text>
</comment>
<evidence type="ECO:0000255" key="1">
    <source>
        <dbReference type="HAMAP-Rule" id="MF_00071"/>
    </source>
</evidence>
<gene>
    <name evidence="1" type="primary">lepA</name>
    <name type="ordered locus">Shewana3_3028</name>
</gene>
<sequence length="596" mass="65971">MKHIRNFSIIAHIDHGKSTLSDRLIQVCGGLSDREMDAQVLDSMDLERERGITIKAQSVTLEYKAKNGETYQLNFIDTPGHVDFSYEVSRSLAACEGALLVVDAGQGVEAQTLANCYTALDMNLDVVPILNKIDLPQADPERVAAEIEDIVGIDAMNAVRCSAKTGVGIDEVLEVIVDQIPPPEGDPEAPLQALIIDSWFDSYLGVVSLVRIKNGVLKKGDKFKVMSTGQNHTADRVGIFTPKQTDKTELKTGEVGFVIAGIKEIHGAPVGDTLTLAKHGAEKPLPGFKKVKPQVYAGVFPISTDEYENFRDALNKLSLNDASLFFEPESSSALGFGFRIGYLGLLHMEIIQERLEREYDLDLITTAPTVVYEVLLTSGETIYVDNPADLPAINNIEEMREPIVEANILVPKEYLGNVITLCIEKRGTQVNMVYHGNQVAVTYHLPMAEVVMDFFDRLKSTSRGYASLEYNFIRFDPADMVRLDILINGDRVDALAMIIHRSNIRHRGLALVEKMKELIPRQMFDIAIQAAVGSQIIARSTVKALRKDVTAKCYGGDVSRKKKLLNKQKEGKKRMKQVGNVEVPQEAFLAVLKLNE</sequence>
<protein>
    <recommendedName>
        <fullName evidence="1">Elongation factor 4</fullName>
        <shortName evidence="1">EF-4</shortName>
        <ecNumber evidence="1">3.6.5.n1</ecNumber>
    </recommendedName>
    <alternativeName>
        <fullName evidence="1">Ribosomal back-translocase LepA</fullName>
    </alternativeName>
</protein>
<organism>
    <name type="scientific">Shewanella sp. (strain ANA-3)</name>
    <dbReference type="NCBI Taxonomy" id="94122"/>
    <lineage>
        <taxon>Bacteria</taxon>
        <taxon>Pseudomonadati</taxon>
        <taxon>Pseudomonadota</taxon>
        <taxon>Gammaproteobacteria</taxon>
        <taxon>Alteromonadales</taxon>
        <taxon>Shewanellaceae</taxon>
        <taxon>Shewanella</taxon>
    </lineage>
</organism>
<name>LEPA_SHESA</name>
<reference key="1">
    <citation type="submission" date="2006-09" db="EMBL/GenBank/DDBJ databases">
        <title>Complete sequence of chromosome 1 of Shewanella sp. ANA-3.</title>
        <authorList>
            <person name="Copeland A."/>
            <person name="Lucas S."/>
            <person name="Lapidus A."/>
            <person name="Barry K."/>
            <person name="Detter J.C."/>
            <person name="Glavina del Rio T."/>
            <person name="Hammon N."/>
            <person name="Israni S."/>
            <person name="Dalin E."/>
            <person name="Tice H."/>
            <person name="Pitluck S."/>
            <person name="Chertkov O."/>
            <person name="Brettin T."/>
            <person name="Bruce D."/>
            <person name="Han C."/>
            <person name="Tapia R."/>
            <person name="Gilna P."/>
            <person name="Schmutz J."/>
            <person name="Larimer F."/>
            <person name="Land M."/>
            <person name="Hauser L."/>
            <person name="Kyrpides N."/>
            <person name="Kim E."/>
            <person name="Newman D."/>
            <person name="Salticov C."/>
            <person name="Konstantinidis K."/>
            <person name="Klappenback J."/>
            <person name="Tiedje J."/>
            <person name="Richardson P."/>
        </authorList>
    </citation>
    <scope>NUCLEOTIDE SEQUENCE [LARGE SCALE GENOMIC DNA]</scope>
    <source>
        <strain>ANA-3</strain>
    </source>
</reference>
<dbReference type="EC" id="3.6.5.n1" evidence="1"/>
<dbReference type="EMBL" id="CP000469">
    <property type="protein sequence ID" value="ABK49253.1"/>
    <property type="molecule type" value="Genomic_DNA"/>
</dbReference>
<dbReference type="RefSeq" id="WP_011717874.1">
    <property type="nucleotide sequence ID" value="NC_008577.1"/>
</dbReference>
<dbReference type="SMR" id="A0KZN4"/>
<dbReference type="STRING" id="94122.Shewana3_3028"/>
<dbReference type="KEGG" id="shn:Shewana3_3028"/>
<dbReference type="eggNOG" id="COG0481">
    <property type="taxonomic scope" value="Bacteria"/>
</dbReference>
<dbReference type="HOGENOM" id="CLU_009995_3_3_6"/>
<dbReference type="OrthoDB" id="9804431at2"/>
<dbReference type="Proteomes" id="UP000002589">
    <property type="component" value="Chromosome"/>
</dbReference>
<dbReference type="GO" id="GO:0005886">
    <property type="term" value="C:plasma membrane"/>
    <property type="evidence" value="ECO:0007669"/>
    <property type="project" value="UniProtKB-SubCell"/>
</dbReference>
<dbReference type="GO" id="GO:0005525">
    <property type="term" value="F:GTP binding"/>
    <property type="evidence" value="ECO:0007669"/>
    <property type="project" value="UniProtKB-UniRule"/>
</dbReference>
<dbReference type="GO" id="GO:0003924">
    <property type="term" value="F:GTPase activity"/>
    <property type="evidence" value="ECO:0007669"/>
    <property type="project" value="UniProtKB-UniRule"/>
</dbReference>
<dbReference type="GO" id="GO:0097216">
    <property type="term" value="F:guanosine tetraphosphate binding"/>
    <property type="evidence" value="ECO:0007669"/>
    <property type="project" value="UniProtKB-ARBA"/>
</dbReference>
<dbReference type="GO" id="GO:0043022">
    <property type="term" value="F:ribosome binding"/>
    <property type="evidence" value="ECO:0007669"/>
    <property type="project" value="UniProtKB-UniRule"/>
</dbReference>
<dbReference type="GO" id="GO:0003746">
    <property type="term" value="F:translation elongation factor activity"/>
    <property type="evidence" value="ECO:0007669"/>
    <property type="project" value="UniProtKB-UniRule"/>
</dbReference>
<dbReference type="GO" id="GO:0045727">
    <property type="term" value="P:positive regulation of translation"/>
    <property type="evidence" value="ECO:0007669"/>
    <property type="project" value="UniProtKB-UniRule"/>
</dbReference>
<dbReference type="CDD" id="cd03699">
    <property type="entry name" value="EF4_II"/>
    <property type="match status" value="1"/>
</dbReference>
<dbReference type="CDD" id="cd16260">
    <property type="entry name" value="EF4_III"/>
    <property type="match status" value="1"/>
</dbReference>
<dbReference type="CDD" id="cd01890">
    <property type="entry name" value="LepA"/>
    <property type="match status" value="1"/>
</dbReference>
<dbReference type="CDD" id="cd03709">
    <property type="entry name" value="lepA_C"/>
    <property type="match status" value="1"/>
</dbReference>
<dbReference type="FunFam" id="3.40.50.300:FF:000078">
    <property type="entry name" value="Elongation factor 4"/>
    <property type="match status" value="1"/>
</dbReference>
<dbReference type="FunFam" id="2.40.30.10:FF:000015">
    <property type="entry name" value="Translation factor GUF1, mitochondrial"/>
    <property type="match status" value="1"/>
</dbReference>
<dbReference type="FunFam" id="3.30.70.240:FF:000007">
    <property type="entry name" value="Translation factor GUF1, mitochondrial"/>
    <property type="match status" value="1"/>
</dbReference>
<dbReference type="FunFam" id="3.30.70.2570:FF:000001">
    <property type="entry name" value="Translation factor GUF1, mitochondrial"/>
    <property type="match status" value="1"/>
</dbReference>
<dbReference type="FunFam" id="3.30.70.870:FF:000004">
    <property type="entry name" value="Translation factor GUF1, mitochondrial"/>
    <property type="match status" value="1"/>
</dbReference>
<dbReference type="Gene3D" id="3.30.70.240">
    <property type="match status" value="1"/>
</dbReference>
<dbReference type="Gene3D" id="3.30.70.2570">
    <property type="entry name" value="Elongation factor 4, C-terminal domain"/>
    <property type="match status" value="1"/>
</dbReference>
<dbReference type="Gene3D" id="3.30.70.870">
    <property type="entry name" value="Elongation Factor G (Translational Gtpase), domain 3"/>
    <property type="match status" value="1"/>
</dbReference>
<dbReference type="Gene3D" id="3.40.50.300">
    <property type="entry name" value="P-loop containing nucleotide triphosphate hydrolases"/>
    <property type="match status" value="1"/>
</dbReference>
<dbReference type="Gene3D" id="2.40.30.10">
    <property type="entry name" value="Translation factors"/>
    <property type="match status" value="1"/>
</dbReference>
<dbReference type="HAMAP" id="MF_00071">
    <property type="entry name" value="LepA"/>
    <property type="match status" value="1"/>
</dbReference>
<dbReference type="InterPro" id="IPR006297">
    <property type="entry name" value="EF-4"/>
</dbReference>
<dbReference type="InterPro" id="IPR035647">
    <property type="entry name" value="EFG_III/V"/>
</dbReference>
<dbReference type="InterPro" id="IPR000640">
    <property type="entry name" value="EFG_V-like"/>
</dbReference>
<dbReference type="InterPro" id="IPR004161">
    <property type="entry name" value="EFTu-like_2"/>
</dbReference>
<dbReference type="InterPro" id="IPR031157">
    <property type="entry name" value="G_TR_CS"/>
</dbReference>
<dbReference type="InterPro" id="IPR038363">
    <property type="entry name" value="LepA_C_sf"/>
</dbReference>
<dbReference type="InterPro" id="IPR013842">
    <property type="entry name" value="LepA_CTD"/>
</dbReference>
<dbReference type="InterPro" id="IPR035654">
    <property type="entry name" value="LepA_IV"/>
</dbReference>
<dbReference type="InterPro" id="IPR027417">
    <property type="entry name" value="P-loop_NTPase"/>
</dbReference>
<dbReference type="InterPro" id="IPR005225">
    <property type="entry name" value="Small_GTP-bd"/>
</dbReference>
<dbReference type="InterPro" id="IPR000795">
    <property type="entry name" value="T_Tr_GTP-bd_dom"/>
</dbReference>
<dbReference type="NCBIfam" id="TIGR01393">
    <property type="entry name" value="lepA"/>
    <property type="match status" value="1"/>
</dbReference>
<dbReference type="NCBIfam" id="TIGR00231">
    <property type="entry name" value="small_GTP"/>
    <property type="match status" value="1"/>
</dbReference>
<dbReference type="PANTHER" id="PTHR43512:SF4">
    <property type="entry name" value="TRANSLATION FACTOR GUF1 HOMOLOG, CHLOROPLASTIC"/>
    <property type="match status" value="1"/>
</dbReference>
<dbReference type="PANTHER" id="PTHR43512">
    <property type="entry name" value="TRANSLATION FACTOR GUF1-RELATED"/>
    <property type="match status" value="1"/>
</dbReference>
<dbReference type="Pfam" id="PF00679">
    <property type="entry name" value="EFG_C"/>
    <property type="match status" value="1"/>
</dbReference>
<dbReference type="Pfam" id="PF00009">
    <property type="entry name" value="GTP_EFTU"/>
    <property type="match status" value="1"/>
</dbReference>
<dbReference type="Pfam" id="PF03144">
    <property type="entry name" value="GTP_EFTU_D2"/>
    <property type="match status" value="1"/>
</dbReference>
<dbReference type="Pfam" id="PF06421">
    <property type="entry name" value="LepA_C"/>
    <property type="match status" value="1"/>
</dbReference>
<dbReference type="PRINTS" id="PR00315">
    <property type="entry name" value="ELONGATNFCT"/>
</dbReference>
<dbReference type="SMART" id="SM00838">
    <property type="entry name" value="EFG_C"/>
    <property type="match status" value="1"/>
</dbReference>
<dbReference type="SUPFAM" id="SSF54980">
    <property type="entry name" value="EF-G C-terminal domain-like"/>
    <property type="match status" value="2"/>
</dbReference>
<dbReference type="SUPFAM" id="SSF52540">
    <property type="entry name" value="P-loop containing nucleoside triphosphate hydrolases"/>
    <property type="match status" value="1"/>
</dbReference>
<dbReference type="PROSITE" id="PS00301">
    <property type="entry name" value="G_TR_1"/>
    <property type="match status" value="1"/>
</dbReference>
<dbReference type="PROSITE" id="PS51722">
    <property type="entry name" value="G_TR_2"/>
    <property type="match status" value="1"/>
</dbReference>
<keyword id="KW-0997">Cell inner membrane</keyword>
<keyword id="KW-1003">Cell membrane</keyword>
<keyword id="KW-0342">GTP-binding</keyword>
<keyword id="KW-0378">Hydrolase</keyword>
<keyword id="KW-0472">Membrane</keyword>
<keyword id="KW-0547">Nucleotide-binding</keyword>
<keyword id="KW-0648">Protein biosynthesis</keyword>
<feature type="chain" id="PRO_1000032054" description="Elongation factor 4">
    <location>
        <begin position="1"/>
        <end position="596"/>
    </location>
</feature>
<feature type="domain" description="tr-type G">
    <location>
        <begin position="2"/>
        <end position="184"/>
    </location>
</feature>
<feature type="binding site" evidence="1">
    <location>
        <begin position="14"/>
        <end position="19"/>
    </location>
    <ligand>
        <name>GTP</name>
        <dbReference type="ChEBI" id="CHEBI:37565"/>
    </ligand>
</feature>
<feature type="binding site" evidence="1">
    <location>
        <begin position="131"/>
        <end position="134"/>
    </location>
    <ligand>
        <name>GTP</name>
        <dbReference type="ChEBI" id="CHEBI:37565"/>
    </ligand>
</feature>
<accession>A0KZN4</accession>